<name>LMNB2_CHICK</name>
<gene>
    <name type="primary">LMNB2</name>
</gene>
<reference key="1">
    <citation type="journal article" date="1989" name="J. Mol. Biol.">
        <title>A second higher vertebrate B-type lamin. cDNA sequence determination and in vitro processing of chicken lamin B2.</title>
        <authorList>
            <person name="Vorburger K."/>
            <person name="Lehner C.F."/>
            <person name="Kitten G.T."/>
            <person name="Eppenberger H.M."/>
            <person name="Nigg E.A."/>
        </authorList>
    </citation>
    <scope>NUCLEOTIDE SEQUENCE [MRNA]</scope>
</reference>
<reference key="2">
    <citation type="journal article" date="1990" name="Cell">
        <title>In vitro disassembly of the nuclear lamina and M phase-specific phosphorylation of lamins by cdc2 kinase.</title>
        <authorList>
            <person name="Peter M."/>
            <person name="Nakagawa J."/>
            <person name="Doree M."/>
            <person name="Labbe J.C."/>
            <person name="Nigg E.A."/>
        </authorList>
    </citation>
    <scope>FUNCTION</scope>
    <scope>SUBCELLULAR LOCATION</scope>
    <scope>PHOSPHORYLATION AT SER-16</scope>
</reference>
<sequence length="600" mass="67941">MSGTPIRGTPGGTPLSPTRISRLQEKEELRQLNDRLAVYIDRVRALELENDRLLVKISEKEEVTTREVSGIKNLYESELADARRVLDETAKERARLQIEIGKLRAELEEFNKSYKKKDADLSVAQGRIKDLEVLFHRSEAELNTVLNEKRSLEAEVADLRAQLAKAEDGHAVAKKQLEKETLMRVDLENRCQSLQEDLDFRKNVFEEEIRETRKRHEHRLVEVDTSRQQEYENKMAQALEDLRNQHDEQVKLYKMELEQTYQAKLENAILASDQNDKAAGAAREELKEARMRIESLSHQLSGLQKQASATEDRIRELKETMAGERDKFRKMLDAKEREMTEMRDQMQLQLTEYQELLDVKLALDMEISAYRKLLEGEEERLKLSPSPSSRVTVSRATSSSSSSSTSLVRSSRGKRRRIEAEELSGSGTSGIGTGSISGSSSSSSFQMSQQASATGSISIEEIDLEGKYVQLKNNSEKDQSLGNWRLKRQIGDGEEIAYKFTPKYVLRAGQTVTIWGADAGVSHSPPSVLVWKNQGSWGTGGNIRTYLVNSDGEEVAVRTVTKSVVVRENEEEEDEADFGEEDLFNQQGDPRTTSRGCLVM</sequence>
<proteinExistence type="evidence at protein level"/>
<organism>
    <name type="scientific">Gallus gallus</name>
    <name type="common">Chicken</name>
    <dbReference type="NCBI Taxonomy" id="9031"/>
    <lineage>
        <taxon>Eukaryota</taxon>
        <taxon>Metazoa</taxon>
        <taxon>Chordata</taxon>
        <taxon>Craniata</taxon>
        <taxon>Vertebrata</taxon>
        <taxon>Euteleostomi</taxon>
        <taxon>Archelosauria</taxon>
        <taxon>Archosauria</taxon>
        <taxon>Dinosauria</taxon>
        <taxon>Saurischia</taxon>
        <taxon>Theropoda</taxon>
        <taxon>Coelurosauria</taxon>
        <taxon>Aves</taxon>
        <taxon>Neognathae</taxon>
        <taxon>Galloanserae</taxon>
        <taxon>Galliformes</taxon>
        <taxon>Phasianidae</taxon>
        <taxon>Phasianinae</taxon>
        <taxon>Gallus</taxon>
    </lineage>
</organism>
<comment type="function">
    <text evidence="1 7">Lamins are intermediate filament proteins that assemble into a filamentous meshwork, and which constitute the major components of the nuclear lamina, a fibrous layer on the nucleoplasmic side of the inner nuclear membrane (PubMed:2188731). Lamins provide a framework for the nuclear envelope, bridging the nuclear envelope and chromatin (By similarity). Plays an important role in nuclear assembly, chromatin organization, nuclear membrane and telomere dynamics (By similarity).</text>
</comment>
<comment type="subunit">
    <text evidence="1">Homodimer (By similarity). Lamin dimers then assemble into dimeric head-to-tail polymers (By similarity). Ultimately, two head-to-tail polymers assemble laterally into a protofilament with a uniformly shaped rod of 3.5 nm in diameter (By similarity).</text>
</comment>
<comment type="subcellular location">
    <subcellularLocation>
        <location evidence="7">Nucleus lamina</location>
    </subcellularLocation>
    <subcellularLocation>
        <location evidence="1">Nucleus envelope</location>
    </subcellularLocation>
    <subcellularLocation>
        <location evidence="1">Nucleus</location>
        <location evidence="1">Nucleoplasm</location>
    </subcellularLocation>
    <subcellularLocation>
        <location evidence="1">Nucleus matrix</location>
    </subcellularLocation>
</comment>
<comment type="PTM">
    <text evidence="7">Phosphorylation plays a key role in lamin organization, subcellular localization and nuclear envelope disintegration (PubMed:2188731). Phosphorylation by CDK1 at Ser-16 at the onset of mitosis drives lamin disassembly and nuclear envelope breakdown (PubMed:2188731).</text>
</comment>
<comment type="similarity">
    <text evidence="5">Belongs to the intermediate filament family.</text>
</comment>
<protein>
    <recommendedName>
        <fullName>Lamin-B2</fullName>
    </recommendedName>
</protein>
<keyword id="KW-0175">Coiled coil</keyword>
<keyword id="KW-0403">Intermediate filament</keyword>
<keyword id="KW-0449">Lipoprotein</keyword>
<keyword id="KW-0488">Methylation</keyword>
<keyword id="KW-0539">Nucleus</keyword>
<keyword id="KW-0597">Phosphoprotein</keyword>
<keyword id="KW-0636">Prenylation</keyword>
<keyword id="KW-1185">Reference proteome</keyword>
<dbReference type="EMBL" id="X16880">
    <property type="protein sequence ID" value="CAA34763.1"/>
    <property type="molecule type" value="mRNA"/>
</dbReference>
<dbReference type="PIR" id="S05519">
    <property type="entry name" value="S05519"/>
</dbReference>
<dbReference type="RefSeq" id="NP_990616.1">
    <property type="nucleotide sequence ID" value="NM_205285.1"/>
</dbReference>
<dbReference type="SMR" id="P14732"/>
<dbReference type="BioGRID" id="676482">
    <property type="interactions" value="1"/>
</dbReference>
<dbReference type="FunCoup" id="P14732">
    <property type="interactions" value="2017"/>
</dbReference>
<dbReference type="IntAct" id="P14732">
    <property type="interactions" value="1"/>
</dbReference>
<dbReference type="STRING" id="9031.ENSGALP00000069371"/>
<dbReference type="iPTMnet" id="P14732"/>
<dbReference type="PaxDb" id="9031-ENSGALP00000000639"/>
<dbReference type="GeneID" id="396222"/>
<dbReference type="KEGG" id="gga:396222"/>
<dbReference type="CTD" id="84823"/>
<dbReference type="VEuPathDB" id="HostDB:geneid_396222"/>
<dbReference type="eggNOG" id="KOG0977">
    <property type="taxonomic scope" value="Eukaryota"/>
</dbReference>
<dbReference type="InParanoid" id="P14732"/>
<dbReference type="OrthoDB" id="102442at2759"/>
<dbReference type="PhylomeDB" id="P14732"/>
<dbReference type="PRO" id="PR:P14732"/>
<dbReference type="Proteomes" id="UP000000539">
    <property type="component" value="Unassembled WGS sequence"/>
</dbReference>
<dbReference type="GO" id="GO:0005882">
    <property type="term" value="C:intermediate filament"/>
    <property type="evidence" value="ECO:0007669"/>
    <property type="project" value="UniProtKB-KW"/>
</dbReference>
<dbReference type="GO" id="GO:0005635">
    <property type="term" value="C:nuclear envelope"/>
    <property type="evidence" value="ECO:0000318"/>
    <property type="project" value="GO_Central"/>
</dbReference>
<dbReference type="GO" id="GO:0005652">
    <property type="term" value="C:nuclear lamina"/>
    <property type="evidence" value="ECO:0000314"/>
    <property type="project" value="UniProtKB"/>
</dbReference>
<dbReference type="GO" id="GO:0016363">
    <property type="term" value="C:nuclear matrix"/>
    <property type="evidence" value="ECO:0007669"/>
    <property type="project" value="UniProtKB-SubCell"/>
</dbReference>
<dbReference type="GO" id="GO:0005654">
    <property type="term" value="C:nucleoplasm"/>
    <property type="evidence" value="ECO:0007669"/>
    <property type="project" value="UniProtKB-SubCell"/>
</dbReference>
<dbReference type="GO" id="GO:0005200">
    <property type="term" value="F:structural constituent of cytoskeleton"/>
    <property type="evidence" value="ECO:0000314"/>
    <property type="project" value="UniProtKB"/>
</dbReference>
<dbReference type="GO" id="GO:0031507">
    <property type="term" value="P:heterochromatin formation"/>
    <property type="evidence" value="ECO:0000318"/>
    <property type="project" value="GO_Central"/>
</dbReference>
<dbReference type="GO" id="GO:0006998">
    <property type="term" value="P:nuclear envelope organization"/>
    <property type="evidence" value="ECO:0000318"/>
    <property type="project" value="GO_Central"/>
</dbReference>
<dbReference type="GO" id="GO:0007097">
    <property type="term" value="P:nuclear migration"/>
    <property type="evidence" value="ECO:0000318"/>
    <property type="project" value="GO_Central"/>
</dbReference>
<dbReference type="GO" id="GO:0051664">
    <property type="term" value="P:nuclear pore localization"/>
    <property type="evidence" value="ECO:0000318"/>
    <property type="project" value="GO_Central"/>
</dbReference>
<dbReference type="GO" id="GO:0090435">
    <property type="term" value="P:protein localization to nuclear envelope"/>
    <property type="evidence" value="ECO:0000318"/>
    <property type="project" value="GO_Central"/>
</dbReference>
<dbReference type="FunFam" id="1.20.5.170:FF:000076">
    <property type="entry name" value="Lamin B2"/>
    <property type="match status" value="1"/>
</dbReference>
<dbReference type="Gene3D" id="1.20.5.170">
    <property type="match status" value="1"/>
</dbReference>
<dbReference type="Gene3D" id="2.60.40.1260">
    <property type="entry name" value="Lamin Tail domain"/>
    <property type="match status" value="1"/>
</dbReference>
<dbReference type="Gene3D" id="1.20.5.1160">
    <property type="entry name" value="Vasodilator-stimulated phosphoprotein"/>
    <property type="match status" value="1"/>
</dbReference>
<dbReference type="InterPro" id="IPR018039">
    <property type="entry name" value="IF_conserved"/>
</dbReference>
<dbReference type="InterPro" id="IPR039008">
    <property type="entry name" value="IF_rod_dom"/>
</dbReference>
<dbReference type="InterPro" id="IPR001322">
    <property type="entry name" value="Lamin_tail_dom"/>
</dbReference>
<dbReference type="InterPro" id="IPR036415">
    <property type="entry name" value="Lamin_tail_dom_sf"/>
</dbReference>
<dbReference type="PANTHER" id="PTHR45721">
    <property type="entry name" value="LAMIN DM0-RELATED"/>
    <property type="match status" value="1"/>
</dbReference>
<dbReference type="PANTHER" id="PTHR45721:SF2">
    <property type="entry name" value="LAMIN-B2"/>
    <property type="match status" value="1"/>
</dbReference>
<dbReference type="Pfam" id="PF00038">
    <property type="entry name" value="Filament"/>
    <property type="match status" value="1"/>
</dbReference>
<dbReference type="Pfam" id="PF00932">
    <property type="entry name" value="LTD"/>
    <property type="match status" value="1"/>
</dbReference>
<dbReference type="SMART" id="SM01391">
    <property type="entry name" value="Filament"/>
    <property type="match status" value="1"/>
</dbReference>
<dbReference type="SUPFAM" id="SSF64593">
    <property type="entry name" value="Intermediate filament protein, coiled coil region"/>
    <property type="match status" value="2"/>
</dbReference>
<dbReference type="SUPFAM" id="SSF74853">
    <property type="entry name" value="Lamin A/C globular tail domain"/>
    <property type="match status" value="1"/>
</dbReference>
<dbReference type="SUPFAM" id="SSF90257">
    <property type="entry name" value="Myosin rod fragments"/>
    <property type="match status" value="1"/>
</dbReference>
<dbReference type="PROSITE" id="PS00226">
    <property type="entry name" value="IF_ROD_1"/>
    <property type="match status" value="1"/>
</dbReference>
<dbReference type="PROSITE" id="PS51842">
    <property type="entry name" value="IF_ROD_2"/>
    <property type="match status" value="1"/>
</dbReference>
<dbReference type="PROSITE" id="PS51841">
    <property type="entry name" value="LTD"/>
    <property type="match status" value="1"/>
</dbReference>
<accession>P14732</accession>
<feature type="chain" id="PRO_0000063822" description="Lamin-B2">
    <location>
        <begin position="1"/>
        <end position="597"/>
    </location>
</feature>
<feature type="propeptide" id="PRO_0000403472" description="Removed in mature form" evidence="2">
    <location>
        <begin position="598"/>
        <end position="600"/>
    </location>
</feature>
<feature type="domain" description="IF rod" evidence="5">
    <location>
        <begin position="25"/>
        <end position="381"/>
    </location>
</feature>
<feature type="domain" description="LTD" evidence="4">
    <location>
        <begin position="445"/>
        <end position="562"/>
    </location>
</feature>
<feature type="region of interest" description="Head">
    <location>
        <begin position="2"/>
        <end position="27"/>
    </location>
</feature>
<feature type="region of interest" description="Coil 1A">
    <location>
        <begin position="28"/>
        <end position="64"/>
    </location>
</feature>
<feature type="region of interest" description="Coil 1B">
    <location>
        <begin position="75"/>
        <end position="212"/>
    </location>
</feature>
<feature type="region of interest" description="Coil 2">
    <location>
        <begin position="237"/>
        <end position="379"/>
    </location>
</feature>
<feature type="region of interest" description="Disordered" evidence="6">
    <location>
        <begin position="377"/>
        <end position="449"/>
    </location>
</feature>
<feature type="region of interest" description="Tail">
    <location>
        <begin position="380"/>
        <end position="600"/>
    </location>
</feature>
<feature type="region of interest" description="Disordered" evidence="6">
    <location>
        <begin position="568"/>
        <end position="600"/>
    </location>
</feature>
<feature type="short sequence motif" description="Nuclear localization signal" evidence="3">
    <location>
        <begin position="414"/>
        <end position="419"/>
    </location>
</feature>
<feature type="compositionally biased region" description="Low complexity" evidence="6">
    <location>
        <begin position="383"/>
        <end position="410"/>
    </location>
</feature>
<feature type="compositionally biased region" description="Acidic residues" evidence="6">
    <location>
        <begin position="569"/>
        <end position="583"/>
    </location>
</feature>
<feature type="compositionally biased region" description="Polar residues" evidence="6">
    <location>
        <begin position="584"/>
        <end position="600"/>
    </location>
</feature>
<feature type="modified residue" description="Phosphoserine; by CDK1" evidence="7">
    <location>
        <position position="16"/>
    </location>
</feature>
<feature type="modified residue" description="Phosphoserine" evidence="1">
    <location>
        <position position="386"/>
    </location>
</feature>
<feature type="modified residue" description="Cysteine methyl ester" evidence="2">
    <location>
        <position position="597"/>
    </location>
</feature>
<feature type="lipid moiety-binding region" description="S-farnesyl cysteine" evidence="2">
    <location>
        <position position="597"/>
    </location>
</feature>
<evidence type="ECO:0000250" key="1">
    <source>
        <dbReference type="UniProtKB" id="P02545"/>
    </source>
</evidence>
<evidence type="ECO:0000250" key="2">
    <source>
        <dbReference type="UniProtKB" id="P20700"/>
    </source>
</evidence>
<evidence type="ECO:0000255" key="3"/>
<evidence type="ECO:0000255" key="4">
    <source>
        <dbReference type="PROSITE-ProRule" id="PRU01187"/>
    </source>
</evidence>
<evidence type="ECO:0000255" key="5">
    <source>
        <dbReference type="PROSITE-ProRule" id="PRU01188"/>
    </source>
</evidence>
<evidence type="ECO:0000256" key="6">
    <source>
        <dbReference type="SAM" id="MobiDB-lite"/>
    </source>
</evidence>
<evidence type="ECO:0000269" key="7">
    <source>
    </source>
</evidence>